<comment type="function">
    <text evidence="1">NQR complex catalyzes the reduction of ubiquinone-1 to ubiquinol by two successive reactions, coupled with the transport of Na(+) ions from the cytoplasm to the periplasm. NqrA to NqrE are probably involved in the second step, the conversion of ubisemiquinone to ubiquinol.</text>
</comment>
<comment type="catalytic activity">
    <reaction evidence="1">
        <text>a ubiquinone + n Na(+)(in) + NADH + H(+) = a ubiquinol + n Na(+)(out) + NAD(+)</text>
        <dbReference type="Rhea" id="RHEA:47748"/>
        <dbReference type="Rhea" id="RHEA-COMP:9565"/>
        <dbReference type="Rhea" id="RHEA-COMP:9566"/>
        <dbReference type="ChEBI" id="CHEBI:15378"/>
        <dbReference type="ChEBI" id="CHEBI:16389"/>
        <dbReference type="ChEBI" id="CHEBI:17976"/>
        <dbReference type="ChEBI" id="CHEBI:29101"/>
        <dbReference type="ChEBI" id="CHEBI:57540"/>
        <dbReference type="ChEBI" id="CHEBI:57945"/>
        <dbReference type="EC" id="7.2.1.1"/>
    </reaction>
</comment>
<comment type="subunit">
    <text evidence="1">Composed of six subunits; NqrA, NqrB, NqrC, NqrD, NqrE and NqrF.</text>
</comment>
<comment type="subcellular location">
    <subcellularLocation>
        <location evidence="1">Cell inner membrane</location>
        <topology evidence="1">Multi-pass membrane protein</topology>
    </subcellularLocation>
</comment>
<comment type="similarity">
    <text evidence="1">Belongs to the NqrDE/RnfAE family.</text>
</comment>
<gene>
    <name evidence="1" type="primary">nqrE</name>
    <name type="ordered locus">Maqu_1927</name>
</gene>
<proteinExistence type="inferred from homology"/>
<sequence length="202" mass="21610">MEHYLSLLLKAIFVENMALAFFLGMCTFLAISKKIEAATGLGIAVVVVLTVTVPVNNLLYNTILREGALDWAGLPNVDLSFLGLLTYIGVIAAIVQIMEMVLDKYIPALYAALGVFLPLITVNCAILGASLFMVERDYTFGESLVYGFGAGVGWALAIIALAGIREKLKYSDVPNGLRGLGITFITVGLMSLGFMSFSGISL</sequence>
<accession>A1U1Y9</accession>
<keyword id="KW-0997">Cell inner membrane</keyword>
<keyword id="KW-1003">Cell membrane</keyword>
<keyword id="KW-0406">Ion transport</keyword>
<keyword id="KW-0472">Membrane</keyword>
<keyword id="KW-0520">NAD</keyword>
<keyword id="KW-0915">Sodium</keyword>
<keyword id="KW-0739">Sodium transport</keyword>
<keyword id="KW-1278">Translocase</keyword>
<keyword id="KW-0812">Transmembrane</keyword>
<keyword id="KW-1133">Transmembrane helix</keyword>
<keyword id="KW-0813">Transport</keyword>
<keyword id="KW-0830">Ubiquinone</keyword>
<feature type="chain" id="PRO_1000060199" description="Na(+)-translocating NADH-quinone reductase subunit E">
    <location>
        <begin position="1"/>
        <end position="202"/>
    </location>
</feature>
<feature type="transmembrane region" description="Helical" evidence="1">
    <location>
        <begin position="11"/>
        <end position="31"/>
    </location>
</feature>
<feature type="transmembrane region" description="Helical" evidence="1">
    <location>
        <begin position="35"/>
        <end position="55"/>
    </location>
</feature>
<feature type="transmembrane region" description="Helical" evidence="1">
    <location>
        <begin position="81"/>
        <end position="101"/>
    </location>
</feature>
<feature type="transmembrane region" description="Helical" evidence="1">
    <location>
        <begin position="114"/>
        <end position="134"/>
    </location>
</feature>
<feature type="transmembrane region" description="Helical" evidence="1">
    <location>
        <begin position="144"/>
        <end position="164"/>
    </location>
</feature>
<feature type="transmembrane region" description="Helical" evidence="1">
    <location>
        <begin position="180"/>
        <end position="200"/>
    </location>
</feature>
<dbReference type="EC" id="7.2.1.1" evidence="1"/>
<dbReference type="EMBL" id="CP000514">
    <property type="protein sequence ID" value="ABM19008.1"/>
    <property type="molecule type" value="Genomic_DNA"/>
</dbReference>
<dbReference type="RefSeq" id="WP_011785401.1">
    <property type="nucleotide sequence ID" value="NC_008740.1"/>
</dbReference>
<dbReference type="SMR" id="A1U1Y9"/>
<dbReference type="STRING" id="351348.Maqu_1927"/>
<dbReference type="DNASU" id="4654238"/>
<dbReference type="GeneID" id="31820846"/>
<dbReference type="KEGG" id="maq:Maqu_1927"/>
<dbReference type="eggNOG" id="COG2209">
    <property type="taxonomic scope" value="Bacteria"/>
</dbReference>
<dbReference type="HOGENOM" id="CLU_095255_0_0_6"/>
<dbReference type="OrthoDB" id="9803631at2"/>
<dbReference type="Proteomes" id="UP000000998">
    <property type="component" value="Chromosome"/>
</dbReference>
<dbReference type="GO" id="GO:0009276">
    <property type="term" value="C:Gram-negative-bacterium-type cell wall"/>
    <property type="evidence" value="ECO:0007669"/>
    <property type="project" value="InterPro"/>
</dbReference>
<dbReference type="GO" id="GO:0005886">
    <property type="term" value="C:plasma membrane"/>
    <property type="evidence" value="ECO:0007669"/>
    <property type="project" value="UniProtKB-SubCell"/>
</dbReference>
<dbReference type="GO" id="GO:0016655">
    <property type="term" value="F:oxidoreductase activity, acting on NAD(P)H, quinone or similar compound as acceptor"/>
    <property type="evidence" value="ECO:0007669"/>
    <property type="project" value="UniProtKB-UniRule"/>
</dbReference>
<dbReference type="GO" id="GO:0022904">
    <property type="term" value="P:respiratory electron transport chain"/>
    <property type="evidence" value="ECO:0007669"/>
    <property type="project" value="InterPro"/>
</dbReference>
<dbReference type="GO" id="GO:0006814">
    <property type="term" value="P:sodium ion transport"/>
    <property type="evidence" value="ECO:0007669"/>
    <property type="project" value="UniProtKB-UniRule"/>
</dbReference>
<dbReference type="HAMAP" id="MF_00429">
    <property type="entry name" value="NqrE"/>
    <property type="match status" value="1"/>
</dbReference>
<dbReference type="InterPro" id="IPR003667">
    <property type="entry name" value="NqrDE/RnfAE"/>
</dbReference>
<dbReference type="InterPro" id="IPR050133">
    <property type="entry name" value="NqrDE/RnfAE_oxidrdctase"/>
</dbReference>
<dbReference type="InterPro" id="IPR010967">
    <property type="entry name" value="NqrE"/>
</dbReference>
<dbReference type="NCBIfam" id="TIGR01940">
    <property type="entry name" value="nqrE"/>
    <property type="match status" value="1"/>
</dbReference>
<dbReference type="PANTHER" id="PTHR30335">
    <property type="entry name" value="INTEGRAL MEMBRANE PROTEIN OF SOXR-REDUCING COMPLEX"/>
    <property type="match status" value="1"/>
</dbReference>
<dbReference type="PANTHER" id="PTHR30335:SF1">
    <property type="entry name" value="NA(+)-TRANSLOCATING NADH-QUINONE REDUCTASE SUBUNIT E"/>
    <property type="match status" value="1"/>
</dbReference>
<dbReference type="Pfam" id="PF02508">
    <property type="entry name" value="Rnf-Nqr"/>
    <property type="match status" value="1"/>
</dbReference>
<dbReference type="PIRSF" id="PIRSF006102">
    <property type="entry name" value="NQR_DE"/>
    <property type="match status" value="1"/>
</dbReference>
<reference key="1">
    <citation type="journal article" date="2011" name="Appl. Environ. Microbiol.">
        <title>Genomic potential of Marinobacter aquaeolei, a biogeochemical 'opportunitroph'.</title>
        <authorList>
            <person name="Singer E."/>
            <person name="Webb E.A."/>
            <person name="Nelson W.C."/>
            <person name="Heidelberg J.F."/>
            <person name="Ivanova N."/>
            <person name="Pati A."/>
            <person name="Edwards K.J."/>
        </authorList>
    </citation>
    <scope>NUCLEOTIDE SEQUENCE [LARGE SCALE GENOMIC DNA]</scope>
    <source>
        <strain>ATCC 700491 / DSM 11845 / VT8</strain>
    </source>
</reference>
<protein>
    <recommendedName>
        <fullName evidence="1">Na(+)-translocating NADH-quinone reductase subunit E</fullName>
        <shortName evidence="1">Na(+)-NQR subunit E</shortName>
        <shortName evidence="1">Na(+)-translocating NQR subunit E</shortName>
        <ecNumber evidence="1">7.2.1.1</ecNumber>
    </recommendedName>
    <alternativeName>
        <fullName evidence="1">NQR complex subunit E</fullName>
    </alternativeName>
    <alternativeName>
        <fullName evidence="1">NQR-1 subunit E</fullName>
    </alternativeName>
</protein>
<name>NQRE_MARN8</name>
<organism>
    <name type="scientific">Marinobacter nauticus (strain ATCC 700491 / DSM 11845 / VT8)</name>
    <name type="common">Marinobacter aquaeolei</name>
    <dbReference type="NCBI Taxonomy" id="351348"/>
    <lineage>
        <taxon>Bacteria</taxon>
        <taxon>Pseudomonadati</taxon>
        <taxon>Pseudomonadota</taxon>
        <taxon>Gammaproteobacteria</taxon>
        <taxon>Pseudomonadales</taxon>
        <taxon>Marinobacteraceae</taxon>
        <taxon>Marinobacter</taxon>
    </lineage>
</organism>
<evidence type="ECO:0000255" key="1">
    <source>
        <dbReference type="HAMAP-Rule" id="MF_00429"/>
    </source>
</evidence>